<comment type="function">
    <text evidence="1">Required for maturation of 30S ribosomal subunits.</text>
</comment>
<comment type="subcellular location">
    <subcellularLocation>
        <location evidence="1">Cytoplasm</location>
    </subcellularLocation>
</comment>
<comment type="similarity">
    <text evidence="1">Belongs to the RimP family.</text>
</comment>
<organism>
    <name type="scientific">Legionella pneumophila subsp. pneumophila (strain Philadelphia 1 / ATCC 33152 / DSM 7513)</name>
    <dbReference type="NCBI Taxonomy" id="272624"/>
    <lineage>
        <taxon>Bacteria</taxon>
        <taxon>Pseudomonadati</taxon>
        <taxon>Pseudomonadota</taxon>
        <taxon>Gammaproteobacteria</taxon>
        <taxon>Legionellales</taxon>
        <taxon>Legionellaceae</taxon>
        <taxon>Legionella</taxon>
    </lineage>
</organism>
<accession>Q5ZRV2</accession>
<reference key="1">
    <citation type="journal article" date="2004" name="Science">
        <title>The genomic sequence of the accidental pathogen Legionella pneumophila.</title>
        <authorList>
            <person name="Chien M."/>
            <person name="Morozova I."/>
            <person name="Shi S."/>
            <person name="Sheng H."/>
            <person name="Chen J."/>
            <person name="Gomez S.M."/>
            <person name="Asamani G."/>
            <person name="Hill K."/>
            <person name="Nuara J."/>
            <person name="Feder M."/>
            <person name="Rineer J."/>
            <person name="Greenberg J.J."/>
            <person name="Steshenko V."/>
            <person name="Park S.H."/>
            <person name="Zhao B."/>
            <person name="Teplitskaya E."/>
            <person name="Edwards J.R."/>
            <person name="Pampou S."/>
            <person name="Georghiou A."/>
            <person name="Chou I.-C."/>
            <person name="Iannuccilli W."/>
            <person name="Ulz M.E."/>
            <person name="Kim D.H."/>
            <person name="Geringer-Sameth A."/>
            <person name="Goldsberry C."/>
            <person name="Morozov P."/>
            <person name="Fischer S.G."/>
            <person name="Segal G."/>
            <person name="Qu X."/>
            <person name="Rzhetsky A."/>
            <person name="Zhang P."/>
            <person name="Cayanis E."/>
            <person name="De Jong P.J."/>
            <person name="Ju J."/>
            <person name="Kalachikov S."/>
            <person name="Shuman H.A."/>
            <person name="Russo J.J."/>
        </authorList>
    </citation>
    <scope>NUCLEOTIDE SEQUENCE [LARGE SCALE GENOMIC DNA]</scope>
    <source>
        <strain>Philadelphia 1 / ATCC 33152 / DSM 7513</strain>
    </source>
</reference>
<feature type="chain" id="PRO_0000229248" description="Ribosome maturation factor RimP">
    <location>
        <begin position="1"/>
        <end position="147"/>
    </location>
</feature>
<dbReference type="EMBL" id="AE017354">
    <property type="protein sequence ID" value="AAU28825.1"/>
    <property type="molecule type" value="Genomic_DNA"/>
</dbReference>
<dbReference type="RefSeq" id="WP_010948464.1">
    <property type="nucleotide sequence ID" value="NC_002942.5"/>
</dbReference>
<dbReference type="RefSeq" id="YP_096772.1">
    <property type="nucleotide sequence ID" value="NC_002942.5"/>
</dbReference>
<dbReference type="SMR" id="Q5ZRV2"/>
<dbReference type="STRING" id="272624.lpg2774"/>
<dbReference type="PaxDb" id="272624-lpg2774"/>
<dbReference type="GeneID" id="57036772"/>
<dbReference type="KEGG" id="lpn:lpg2774"/>
<dbReference type="PATRIC" id="fig|272624.6.peg.2956"/>
<dbReference type="eggNOG" id="COG0779">
    <property type="taxonomic scope" value="Bacteria"/>
</dbReference>
<dbReference type="HOGENOM" id="CLU_070525_1_1_6"/>
<dbReference type="OrthoDB" id="9805006at2"/>
<dbReference type="Proteomes" id="UP000000609">
    <property type="component" value="Chromosome"/>
</dbReference>
<dbReference type="GO" id="GO:0005829">
    <property type="term" value="C:cytosol"/>
    <property type="evidence" value="ECO:0007669"/>
    <property type="project" value="TreeGrafter"/>
</dbReference>
<dbReference type="GO" id="GO:0000028">
    <property type="term" value="P:ribosomal small subunit assembly"/>
    <property type="evidence" value="ECO:0007669"/>
    <property type="project" value="TreeGrafter"/>
</dbReference>
<dbReference type="GO" id="GO:0006412">
    <property type="term" value="P:translation"/>
    <property type="evidence" value="ECO:0007669"/>
    <property type="project" value="TreeGrafter"/>
</dbReference>
<dbReference type="CDD" id="cd01734">
    <property type="entry name" value="YlxS_C"/>
    <property type="match status" value="1"/>
</dbReference>
<dbReference type="FunFam" id="3.30.300.70:FF:000001">
    <property type="entry name" value="Ribosome maturation factor RimP"/>
    <property type="match status" value="1"/>
</dbReference>
<dbReference type="Gene3D" id="2.30.30.180">
    <property type="entry name" value="Ribosome maturation factor RimP, C-terminal domain"/>
    <property type="match status" value="1"/>
</dbReference>
<dbReference type="Gene3D" id="3.30.300.70">
    <property type="entry name" value="RimP-like superfamily, N-terminal"/>
    <property type="match status" value="1"/>
</dbReference>
<dbReference type="HAMAP" id="MF_01077">
    <property type="entry name" value="RimP"/>
    <property type="match status" value="1"/>
</dbReference>
<dbReference type="InterPro" id="IPR003728">
    <property type="entry name" value="Ribosome_maturation_RimP"/>
</dbReference>
<dbReference type="InterPro" id="IPR028998">
    <property type="entry name" value="RimP_C"/>
</dbReference>
<dbReference type="InterPro" id="IPR036847">
    <property type="entry name" value="RimP_C_sf"/>
</dbReference>
<dbReference type="InterPro" id="IPR028989">
    <property type="entry name" value="RimP_N"/>
</dbReference>
<dbReference type="InterPro" id="IPR035956">
    <property type="entry name" value="RimP_N_sf"/>
</dbReference>
<dbReference type="NCBIfam" id="NF000927">
    <property type="entry name" value="PRK00092.1-1"/>
    <property type="match status" value="1"/>
</dbReference>
<dbReference type="PANTHER" id="PTHR33867">
    <property type="entry name" value="RIBOSOME MATURATION FACTOR RIMP"/>
    <property type="match status" value="1"/>
</dbReference>
<dbReference type="PANTHER" id="PTHR33867:SF1">
    <property type="entry name" value="RIBOSOME MATURATION FACTOR RIMP"/>
    <property type="match status" value="1"/>
</dbReference>
<dbReference type="Pfam" id="PF17384">
    <property type="entry name" value="DUF150_C"/>
    <property type="match status" value="1"/>
</dbReference>
<dbReference type="Pfam" id="PF02576">
    <property type="entry name" value="RimP_N"/>
    <property type="match status" value="1"/>
</dbReference>
<dbReference type="SUPFAM" id="SSF74942">
    <property type="entry name" value="YhbC-like, C-terminal domain"/>
    <property type="match status" value="1"/>
</dbReference>
<dbReference type="SUPFAM" id="SSF75420">
    <property type="entry name" value="YhbC-like, N-terminal domain"/>
    <property type="match status" value="1"/>
</dbReference>
<protein>
    <recommendedName>
        <fullName evidence="1">Ribosome maturation factor RimP</fullName>
    </recommendedName>
</protein>
<evidence type="ECO:0000255" key="1">
    <source>
        <dbReference type="HAMAP-Rule" id="MF_01077"/>
    </source>
</evidence>
<keyword id="KW-0963">Cytoplasm</keyword>
<keyword id="KW-1185">Reference proteome</keyword>
<keyword id="KW-0690">Ribosome biogenesis</keyword>
<sequence>MINDDLIVLLEPIIKNMGYELWGCEYLSQGKHSLLRIYIDKPDGIGIDDCQEVSKQVSAMLDVEDPIPGHYSLEISSPGIPRPLFSIWQYQRYLGYEIHVKTFKPVNGKRKLSGIIVSASEDTIVLDINNEHQEILLSNIVKANLTV</sequence>
<proteinExistence type="inferred from homology"/>
<name>RIMP_LEGPH</name>
<gene>
    <name evidence="1" type="primary">rimP</name>
    <name type="ordered locus">lpg2774</name>
</gene>